<evidence type="ECO:0000250" key="1"/>
<evidence type="ECO:0000250" key="2">
    <source>
        <dbReference type="UniProtKB" id="P07998"/>
    </source>
</evidence>
<evidence type="ECO:0000250" key="3">
    <source>
        <dbReference type="UniProtKB" id="P61823"/>
    </source>
</evidence>
<evidence type="ECO:0000255" key="4"/>
<evidence type="ECO:0000269" key="5">
    <source>
    </source>
</evidence>
<evidence type="ECO:0000303" key="6">
    <source>
    </source>
</evidence>
<evidence type="ECO:0000305" key="7"/>
<dbReference type="EC" id="4.6.1.18" evidence="3"/>
<dbReference type="GO" id="GO:0005576">
    <property type="term" value="C:extracellular region"/>
    <property type="evidence" value="ECO:0007669"/>
    <property type="project" value="UniProtKB-SubCell"/>
</dbReference>
<dbReference type="GO" id="GO:0016829">
    <property type="term" value="F:lyase activity"/>
    <property type="evidence" value="ECO:0007669"/>
    <property type="project" value="UniProtKB-KW"/>
</dbReference>
<dbReference type="GO" id="GO:0003676">
    <property type="term" value="F:nucleic acid binding"/>
    <property type="evidence" value="ECO:0007669"/>
    <property type="project" value="InterPro"/>
</dbReference>
<dbReference type="GO" id="GO:0004522">
    <property type="term" value="F:ribonuclease A activity"/>
    <property type="evidence" value="ECO:0007669"/>
    <property type="project" value="UniProtKB-EC"/>
</dbReference>
<dbReference type="GO" id="GO:0050830">
    <property type="term" value="P:defense response to Gram-positive bacterium"/>
    <property type="evidence" value="ECO:0007669"/>
    <property type="project" value="TreeGrafter"/>
</dbReference>
<dbReference type="CDD" id="cd06265">
    <property type="entry name" value="RNase_A_canonical"/>
    <property type="match status" value="1"/>
</dbReference>
<dbReference type="FunFam" id="3.10.130.10:FF:000001">
    <property type="entry name" value="Ribonuclease pancreatic"/>
    <property type="match status" value="1"/>
</dbReference>
<dbReference type="Gene3D" id="3.10.130.10">
    <property type="entry name" value="Ribonuclease A-like domain"/>
    <property type="match status" value="1"/>
</dbReference>
<dbReference type="InterPro" id="IPR001427">
    <property type="entry name" value="RNaseA"/>
</dbReference>
<dbReference type="InterPro" id="IPR036816">
    <property type="entry name" value="RNaseA-like_dom_sf"/>
</dbReference>
<dbReference type="InterPro" id="IPR023411">
    <property type="entry name" value="RNaseA_AS"/>
</dbReference>
<dbReference type="InterPro" id="IPR023412">
    <property type="entry name" value="RNaseA_domain"/>
</dbReference>
<dbReference type="PANTHER" id="PTHR11437">
    <property type="entry name" value="RIBONUCLEASE"/>
    <property type="match status" value="1"/>
</dbReference>
<dbReference type="PANTHER" id="PTHR11437:SF24">
    <property type="entry name" value="RIBONUCLEASE PANCREATIC"/>
    <property type="match status" value="1"/>
</dbReference>
<dbReference type="Pfam" id="PF00074">
    <property type="entry name" value="RnaseA"/>
    <property type="match status" value="1"/>
</dbReference>
<dbReference type="PRINTS" id="PR00794">
    <property type="entry name" value="RIBONUCLEASE"/>
</dbReference>
<dbReference type="SMART" id="SM00092">
    <property type="entry name" value="RNAse_Pc"/>
    <property type="match status" value="1"/>
</dbReference>
<dbReference type="SUPFAM" id="SSF54076">
    <property type="entry name" value="RNase A-like"/>
    <property type="match status" value="1"/>
</dbReference>
<dbReference type="PROSITE" id="PS00127">
    <property type="entry name" value="RNASE_PANCREATIC"/>
    <property type="match status" value="1"/>
</dbReference>
<protein>
    <recommendedName>
        <fullName evidence="6">Ribonuclease pancreatic</fullName>
        <ecNumber evidence="3">4.6.1.18</ecNumber>
    </recommendedName>
    <alternativeName>
        <fullName evidence="3">RNase 1</fullName>
    </alternativeName>
    <alternativeName>
        <fullName evidence="3">RNase A</fullName>
    </alternativeName>
</protein>
<keyword id="KW-0903">Direct protein sequencing</keyword>
<keyword id="KW-1015">Disulfide bond</keyword>
<keyword id="KW-0255">Endonuclease</keyword>
<keyword id="KW-0378">Hydrolase</keyword>
<keyword id="KW-0456">Lyase</keyword>
<keyword id="KW-0540">Nuclease</keyword>
<keyword id="KW-0964">Secreted</keyword>
<name>RNAS1_NOTRU</name>
<sequence>ETAAEKFQRQHMDTEHSTASSSNYCNLMMKAREMTSDRCKPVNTFIHEPKSVVDAVCXQENVTCKNGQTNCYKSNSRLSITNCRQTGASXYPNCQYETSNLQKQIIVACEGQYVPVHFDAYV</sequence>
<comment type="function">
    <text evidence="1">Endonuclease that catalyzes the cleavage of RNA on the 3' side of pyrimidine nucleotides. Acts on single-stranded and double-stranded RNA (By similarity).</text>
</comment>
<comment type="catalytic activity">
    <reaction evidence="3">
        <text>an [RNA] containing cytidine + H2O = an [RNA]-3'-cytidine-3'-phosphate + a 5'-hydroxy-ribonucleotide-3'-[RNA].</text>
        <dbReference type="EC" id="4.6.1.18"/>
    </reaction>
</comment>
<comment type="catalytic activity">
    <reaction evidence="3">
        <text>an [RNA] containing uridine + H2O = an [RNA]-3'-uridine-3'-phosphate + a 5'-hydroxy-ribonucleotide-3'-[RNA].</text>
        <dbReference type="EC" id="4.6.1.18"/>
    </reaction>
</comment>
<comment type="subunit">
    <text evidence="2">Monomer. Interacts with and forms tight 1:1 complexes with RNH1. Dimerization of two such complexes may occur. Interaction with RNH1 inhibits this protein (By similarity).</text>
</comment>
<comment type="subcellular location">
    <subcellularLocation>
        <location evidence="3">Secreted</location>
    </subcellularLocation>
</comment>
<comment type="tissue specificity">
    <text evidence="7">Pancreas.</text>
</comment>
<comment type="similarity">
    <text evidence="4">Belongs to the pancreatic ribonuclease family.</text>
</comment>
<reference evidence="7" key="1">
    <citation type="journal article" date="1978" name="Eur. J. Biochem.">
        <title>The amino-acid sequence of kangaroo pancreatic ribonuclease.</title>
        <authorList>
            <person name="Gaastra W."/>
            <person name="Welling G.W."/>
            <person name="Beintema J.J."/>
        </authorList>
    </citation>
    <scope>PROTEIN SEQUENCE</scope>
    <source>
        <tissue evidence="5">Pancreas</tissue>
    </source>
</reference>
<reference evidence="7" key="2">
    <citation type="submission" date="2012-04" db="UniProtKB">
        <authorList>
            <person name="Beintema J."/>
        </authorList>
    </citation>
    <scope>UPDATE TO PROTEIN SEQUENCE</scope>
</reference>
<proteinExistence type="evidence at protein level"/>
<feature type="chain" id="PRO_0000417916" description="Ribonuclease pancreatic">
    <location>
        <begin position="1"/>
        <end position="122"/>
    </location>
</feature>
<feature type="active site" description="Proton acceptor" evidence="3">
    <location>
        <position position="11"/>
    </location>
</feature>
<feature type="active site" description="Proton donor" evidence="3">
    <location>
        <position position="117"/>
    </location>
</feature>
<feature type="binding site" evidence="3">
    <location>
        <position position="6"/>
    </location>
    <ligand>
        <name>substrate</name>
    </ligand>
</feature>
<feature type="binding site" evidence="3">
    <location>
        <position position="9"/>
    </location>
    <ligand>
        <name>substrate</name>
    </ligand>
</feature>
<feature type="binding site" evidence="3">
    <location>
        <begin position="40"/>
        <end position="44"/>
    </location>
    <ligand>
        <name>substrate</name>
    </ligand>
</feature>
<feature type="binding site" evidence="3">
    <location>
        <position position="65"/>
    </location>
    <ligand>
        <name>substrate</name>
    </ligand>
</feature>
<feature type="binding site" evidence="3">
    <location>
        <position position="84"/>
    </location>
    <ligand>
        <name>substrate</name>
    </ligand>
</feature>
<feature type="disulfide bond" evidence="3">
    <location>
        <begin position="25"/>
        <end position="83"/>
    </location>
</feature>
<feature type="disulfide bond" evidence="3">
    <location>
        <begin position="39"/>
        <end position="94"/>
    </location>
</feature>
<feature type="disulfide bond" evidence="3">
    <location>
        <begin position="57"/>
        <end position="109"/>
    </location>
</feature>
<feature type="disulfide bond" evidence="3">
    <location>
        <begin position="64"/>
        <end position="71"/>
    </location>
</feature>
<organism>
    <name type="scientific">Notamacropus rufogriseus</name>
    <name type="common">Red-necked wallaby</name>
    <name type="synonym">Macropus rufogriseus</name>
    <dbReference type="NCBI Taxonomy" id="1960652"/>
    <lineage>
        <taxon>Eukaryota</taxon>
        <taxon>Metazoa</taxon>
        <taxon>Chordata</taxon>
        <taxon>Craniata</taxon>
        <taxon>Vertebrata</taxon>
        <taxon>Euteleostomi</taxon>
        <taxon>Mammalia</taxon>
        <taxon>Metatheria</taxon>
        <taxon>Diprotodontia</taxon>
        <taxon>Macropodidae</taxon>
        <taxon>Notamacropus</taxon>
    </lineage>
</organism>
<accession>B3EWJ0</accession>